<organism>
    <name type="scientific">Acinetobacter baylyi (strain ATCC 33305 / BD413 / ADP1)</name>
    <dbReference type="NCBI Taxonomy" id="62977"/>
    <lineage>
        <taxon>Bacteria</taxon>
        <taxon>Pseudomonadati</taxon>
        <taxon>Pseudomonadota</taxon>
        <taxon>Gammaproteobacteria</taxon>
        <taxon>Moraxellales</taxon>
        <taxon>Moraxellaceae</taxon>
        <taxon>Acinetobacter</taxon>
    </lineage>
</organism>
<keyword id="KW-0067">ATP-binding</keyword>
<keyword id="KW-0963">Cytoplasm</keyword>
<keyword id="KW-0479">Metal-binding</keyword>
<keyword id="KW-0547">Nucleotide-binding</keyword>
<keyword id="KW-0862">Zinc</keyword>
<proteinExistence type="inferred from homology"/>
<evidence type="ECO:0000250" key="1">
    <source>
        <dbReference type="UniProtKB" id="P22608"/>
    </source>
</evidence>
<evidence type="ECO:0000250" key="2">
    <source>
        <dbReference type="UniProtKB" id="Q5SLC9"/>
    </source>
</evidence>
<evidence type="ECO:0000269" key="3">
    <source>
    </source>
</evidence>
<evidence type="ECO:0000303" key="4">
    <source>
    </source>
</evidence>
<evidence type="ECO:0000305" key="5"/>
<evidence type="ECO:0000312" key="6">
    <source>
        <dbReference type="EMBL" id="CAG69034.1"/>
    </source>
</evidence>
<sequence length="585" mass="66193">MTYHFEIDTQWCLEQLLKDGRISERDKLLIQTTHRNKEQLKWHPLQWIAHFDLKDQAHTSKPFDILRLSQWLAEKVGLPLYVIDPLKADVNMLTSVMSQEFALRNKILAVDVNPERILIGTDQPFVRDWVSNLELSLAPKKIELVLLSPDQLQRYLPEYYQVSRAVHSSKNATAYERDNKGVEALLQLGDNQNPDANDQHIVKLVDWILQFAFEQGASDIHLEPRKEKGKVRFRIDGVLHTIYHMPANTLSAVIARIKILGRLNVAEKRKPQDGRLKTRTPKGQETELRLSTLPTAFGEKLVMRIFDPDVLVRSFEQLGFDEILLKQWQALSRNSHGIILVTGPTGSGKTTTLYSSLKQLATDQVNVCTIEDPIEMLESSFNQMQVNAAIDLGFADGVRALMRQDPDIIMVGEIRDQDTANMAIQAALTGHLVLSTLHTNDAPSSLTRLHDLGVQPFLTAATLLGVLAQRLVRQLCPHCKVLSDIDKQQWQHLTQDYEIAMPEQIYGPVGCDHCRQTGYKGRIGIYEFMSLDLNLKQLVSSEANLNQLKSEAKKQGIQPLRIAGARKILEGVTSLEEVLRVVPLT</sequence>
<feature type="chain" id="PRO_0000453802" description="Type IV pilus assembly ATPase TfpB">
    <location>
        <begin position="1"/>
        <end position="585"/>
    </location>
</feature>
<feature type="binding site" evidence="2">
    <location>
        <begin position="346"/>
        <end position="351"/>
    </location>
    <ligand>
        <name>ATP</name>
        <dbReference type="ChEBI" id="CHEBI:30616"/>
    </ligand>
</feature>
<feature type="binding site" evidence="2">
    <location>
        <position position="476"/>
    </location>
    <ligand>
        <name>Zn(2+)</name>
        <dbReference type="ChEBI" id="CHEBI:29105"/>
    </ligand>
</feature>
<feature type="binding site" evidence="2">
    <location>
        <position position="479"/>
    </location>
    <ligand>
        <name>Zn(2+)</name>
        <dbReference type="ChEBI" id="CHEBI:29105"/>
    </ligand>
</feature>
<feature type="binding site" evidence="2">
    <location>
        <position position="511"/>
    </location>
    <ligand>
        <name>Zn(2+)</name>
        <dbReference type="ChEBI" id="CHEBI:29105"/>
    </ligand>
</feature>
<feature type="binding site" evidence="2">
    <location>
        <position position="514"/>
    </location>
    <ligand>
        <name>Zn(2+)</name>
        <dbReference type="ChEBI" id="CHEBI:29105"/>
    </ligand>
</feature>
<gene>
    <name evidence="4" type="primary">tfpB</name>
    <name evidence="6" type="ordered locus">ACIAD2241</name>
</gene>
<dbReference type="EMBL" id="CR543861">
    <property type="protein sequence ID" value="CAG69034.1"/>
    <property type="molecule type" value="Genomic_DNA"/>
</dbReference>
<dbReference type="RefSeq" id="WP_004927862.1">
    <property type="nucleotide sequence ID" value="NC_005966.1"/>
</dbReference>
<dbReference type="SMR" id="Q6FA79"/>
<dbReference type="STRING" id="202950.GCA_001485005_00155"/>
<dbReference type="GeneID" id="45234570"/>
<dbReference type="KEGG" id="aci:ACIAD2241"/>
<dbReference type="eggNOG" id="COG2804">
    <property type="taxonomic scope" value="Bacteria"/>
</dbReference>
<dbReference type="HOGENOM" id="CLU_013446_10_1_6"/>
<dbReference type="OrthoDB" id="9804785at2"/>
<dbReference type="BioCyc" id="ASP62977:ACIAD_RS10260-MONOMER"/>
<dbReference type="Proteomes" id="UP000000430">
    <property type="component" value="Chromosome"/>
</dbReference>
<dbReference type="GO" id="GO:0005737">
    <property type="term" value="C:cytoplasm"/>
    <property type="evidence" value="ECO:0007669"/>
    <property type="project" value="UniProtKB-SubCell"/>
</dbReference>
<dbReference type="GO" id="GO:0005886">
    <property type="term" value="C:plasma membrane"/>
    <property type="evidence" value="ECO:0007669"/>
    <property type="project" value="TreeGrafter"/>
</dbReference>
<dbReference type="GO" id="GO:0005524">
    <property type="term" value="F:ATP binding"/>
    <property type="evidence" value="ECO:0007669"/>
    <property type="project" value="UniProtKB-KW"/>
</dbReference>
<dbReference type="GO" id="GO:0016887">
    <property type="term" value="F:ATP hydrolysis activity"/>
    <property type="evidence" value="ECO:0007669"/>
    <property type="project" value="TreeGrafter"/>
</dbReference>
<dbReference type="GO" id="GO:0046872">
    <property type="term" value="F:metal ion binding"/>
    <property type="evidence" value="ECO:0007669"/>
    <property type="project" value="UniProtKB-KW"/>
</dbReference>
<dbReference type="CDD" id="cd01129">
    <property type="entry name" value="PulE-GspE-like"/>
    <property type="match status" value="1"/>
</dbReference>
<dbReference type="FunFam" id="3.40.50.300:FF:000398">
    <property type="entry name" value="Type IV pilus assembly ATPase PilB"/>
    <property type="match status" value="1"/>
</dbReference>
<dbReference type="Gene3D" id="3.30.450.90">
    <property type="match status" value="1"/>
</dbReference>
<dbReference type="Gene3D" id="3.40.50.300">
    <property type="entry name" value="P-loop containing nucleotide triphosphate hydrolases"/>
    <property type="match status" value="1"/>
</dbReference>
<dbReference type="InterPro" id="IPR027417">
    <property type="entry name" value="P-loop_NTPase"/>
</dbReference>
<dbReference type="InterPro" id="IPR001482">
    <property type="entry name" value="T2SS/T4SS_dom"/>
</dbReference>
<dbReference type="InterPro" id="IPR037257">
    <property type="entry name" value="T2SS_E_N_sf"/>
</dbReference>
<dbReference type="InterPro" id="IPR007831">
    <property type="entry name" value="T2SS_GspE_N"/>
</dbReference>
<dbReference type="PANTHER" id="PTHR30258:SF13">
    <property type="entry name" value="SECRETION PATHWAY ATPASE-RELATED"/>
    <property type="match status" value="1"/>
</dbReference>
<dbReference type="PANTHER" id="PTHR30258">
    <property type="entry name" value="TYPE II SECRETION SYSTEM PROTEIN GSPE-RELATED"/>
    <property type="match status" value="1"/>
</dbReference>
<dbReference type="Pfam" id="PF05157">
    <property type="entry name" value="MshEN"/>
    <property type="match status" value="1"/>
</dbReference>
<dbReference type="Pfam" id="PF00437">
    <property type="entry name" value="T2SSE"/>
    <property type="match status" value="1"/>
</dbReference>
<dbReference type="SUPFAM" id="SSF160246">
    <property type="entry name" value="EspE N-terminal domain-like"/>
    <property type="match status" value="1"/>
</dbReference>
<dbReference type="SUPFAM" id="SSF52540">
    <property type="entry name" value="P-loop containing nucleoside triphosphate hydrolases"/>
    <property type="match status" value="1"/>
</dbReference>
<dbReference type="PROSITE" id="PS00662">
    <property type="entry name" value="T2SP_E"/>
    <property type="match status" value="1"/>
</dbReference>
<reference key="1">
    <citation type="journal article" date="2004" name="Nucleic Acids Res.">
        <title>Unique features revealed by the genome sequence of Acinetobacter sp. ADP1, a versatile and naturally transformation competent bacterium.</title>
        <authorList>
            <person name="Barbe V."/>
            <person name="Vallenet D."/>
            <person name="Fonknechten N."/>
            <person name="Kreimeyer A."/>
            <person name="Oztas S."/>
            <person name="Labarre L."/>
            <person name="Cruveiller S."/>
            <person name="Robert C."/>
            <person name="Duprat S."/>
            <person name="Wincker P."/>
            <person name="Ornston L.N."/>
            <person name="Weissenbach J."/>
            <person name="Marliere P."/>
            <person name="Cohen G.N."/>
            <person name="Medigue C."/>
        </authorList>
    </citation>
    <scope>NUCLEOTIDE SEQUENCE [LARGE SCALE GENOMIC DNA]</scope>
    <source>
        <strain>ATCC 33305 / BD413 / ADP1</strain>
    </source>
</reference>
<reference key="2">
    <citation type="journal article" date="2021" name="Nat. Commun.">
        <title>Acinetobacter baylyi regulates type IV pilus synthesis by employing two extension motors and a motor protein inhibitor.</title>
        <authorList>
            <person name="Ellison C.K."/>
            <person name="Dalia T.N."/>
            <person name="Klancher C.A."/>
            <person name="Shaevitz J.W."/>
            <person name="Gitai Z."/>
            <person name="Dalia A.B."/>
        </authorList>
    </citation>
    <scope>FUNCTION</scope>
    <scope>OVEREXPRESSION</scope>
    <scope>DISRUPTION PHENOTYPE</scope>
    <source>
        <strain>ATCC 33305 / BD413 / ADP1</strain>
    </source>
</reference>
<comment type="function">
    <text evidence="1 3">ATPase component of the type IV pilus (T4P) (By similarity). Acts as a molecular motor to provide the energy that is required for biogenesis of the pilus and the extrusion of substrates generated in the cytoplasm (By similarity). TfpB is required for optimal T4P extension and, consequently, efficient natural transformation. May play a role in initiating T4P extension (PubMed:34145281).</text>
</comment>
<comment type="subcellular location">
    <subcellularLocation>
        <location evidence="1">Cytoplasm</location>
    </subcellularLocation>
</comment>
<comment type="disruption phenotype">
    <text evidence="3">Disruption of the gene reduces transformation rates by two orders of magnitude. Natural transformation is undetectable in the pilB-tfpB double mutant. The tfpB-pilT mutant makes very few T4P. The pilB-tfpB-pilT triple mutant produces no detectable T4P fibers.</text>
</comment>
<comment type="miscellaneous">
    <text evidence="3">Both PilB and TfpB are essential for optimal T4P production, with each motor playing a distinct role in T4P extension. Overexpression of tfpB does not restore the transformation defect of a pilB mutant.</text>
</comment>
<comment type="similarity">
    <text evidence="5">Belongs to the GSP E family.</text>
</comment>
<protein>
    <recommendedName>
        <fullName evidence="5">Type IV pilus assembly ATPase TfpB</fullName>
    </recommendedName>
    <alternativeName>
        <fullName evidence="4">Type four pilus PilB-like protein</fullName>
    </alternativeName>
</protein>
<name>TFPB_ACIAD</name>
<accession>Q6FA79</accession>